<sequence>MEEKTQIKTFLGSKLPKYGMKSVRSTLQPMPNGATVTLLGTSKSSNVKSYIKNNGSDCSLSHSFNWRKTNKYQLGSQNTAELNNIQSTHDKLIEPEQHAPAPGTLDGHGIKGGLKSASLFTSKLARPSTMFVSSAEELSQKSFSGPSNLGKFTKGTLLGRTSYSSVNAKSHLNAFYGNRSSGNVQKPRVNSCASRSSSGESLAQSPDNAKSITCEKMVRSQSFSHSIQNVFLPPSSITRSHSFNRAVDLTKPYQNQQLPVRVPLRSGMLTRSSLQSEVLNGNEHVGFGFNRPYAAAGKKLALSNGPAVSSTLVYRMAHPPLLKSSRPPFSGPMTVDSNKNPPADMCVEEEGMVSAQDSSPGKDQELIENESYRRDNDQTGKNESKVRYLSDDVDDISLSSLSSSDKNDLSEDFSDDFIDLEDSNRTRITPEEMTLKEEKHESRPSKDIFDSPKESEQAFSKAEEWIDISVSDRSECTKHTSGNNLISPDTDYRAGSSFELSPSDSSDGTYMWDEEGLEPIGSVHPVGSYESSEMNSIDILNNLESCDLEDDDLMLDVDLPEDAPLENVECDNMNRFDRTDRNVRQSQDGFWKRPPQRWSGQDHYHLSHPGHYHHHGQSDLSRGSPYRESPLGHFESYGGTPFFQAQKMFVDVPDNTVILDEMTLRHMVQDCTAVKTQLLKLKRLLHQHDGSGSLHDVQLSLPSSPEPEDGDQIYKNEDLLNEITQLKEEIKKKDEKIQLLEQQLATRCNCQQKSKEEKCTYADKYTQTPWRRIPGGYCAPSFSPWQGSFQGMPRTVPPHRRQTSSTTAFQQPSQIYRPRPGKTNKATTYRGPQ</sequence>
<feature type="chain" id="PRO_0000309462" description="Serine-rich coiled-coil domain-containing protein 2">
    <location>
        <begin position="1"/>
        <end position="833"/>
    </location>
</feature>
<feature type="region of interest" description="Disordered" evidence="3">
    <location>
        <begin position="178"/>
        <end position="208"/>
    </location>
</feature>
<feature type="region of interest" description="Disordered" evidence="3">
    <location>
        <begin position="321"/>
        <end position="345"/>
    </location>
</feature>
<feature type="region of interest" description="Disordered" evidence="3">
    <location>
        <begin position="424"/>
        <end position="452"/>
    </location>
</feature>
<feature type="region of interest" description="Disordered" evidence="3">
    <location>
        <begin position="478"/>
        <end position="508"/>
    </location>
</feature>
<feature type="region of interest" description="Disordered" evidence="3">
    <location>
        <begin position="602"/>
        <end position="631"/>
    </location>
</feature>
<feature type="region of interest" description="Disordered" evidence="3">
    <location>
        <begin position="789"/>
        <end position="833"/>
    </location>
</feature>
<feature type="coiled-coil region" evidence="2">
    <location>
        <begin position="711"/>
        <end position="747"/>
    </location>
</feature>
<feature type="compositionally biased region" description="Polar residues" evidence="3">
    <location>
        <begin position="191"/>
        <end position="208"/>
    </location>
</feature>
<feature type="compositionally biased region" description="Low complexity" evidence="3">
    <location>
        <begin position="496"/>
        <end position="506"/>
    </location>
</feature>
<feature type="compositionally biased region" description="Basic residues" evidence="3">
    <location>
        <begin position="606"/>
        <end position="615"/>
    </location>
</feature>
<feature type="compositionally biased region" description="Polar residues" evidence="3">
    <location>
        <begin position="803"/>
        <end position="814"/>
    </location>
</feature>
<feature type="modified residue" description="Phosphoserine" evidence="1">
    <location>
        <position position="222"/>
    </location>
</feature>
<feature type="modified residue" description="Phosphoserine" evidence="8">
    <location>
        <position position="451"/>
    </location>
</feature>
<feature type="splice variant" id="VSP_029183" description="In isoform 2." evidence="5 6">
    <original>GGYCAPSFSPWQGSFQGMPRTVPPHRRQTSSTTAFQQPSQIYRPRPGKTNKATTYRGPQ</original>
    <variation>PQVLQPSSSLPRSTDHAQGKLIKPQRTEAHSDYTVQGVCPGGAHPDGSCTHGLQQDNSRGLQERPSSSSPQLTVDVVKYIPSETDLSMTLDAQEPHHLAEKKPSDLQFVTPPPQTPSQSSTVDQTKRGGRNQCPQPKSLQLLKPSNLSSLTPPPDSDSSPSRTSTCKKAPGITPCHSKHQPTSNQNNPANHLNLKTSKLRPPSGSFKQKQISNPQVEPQNFQAKTSIPRPLARPKELHAPHSGLHSGDCVASNRYSRLPKPKIH</variation>
    <location>
        <begin position="775"/>
        <end position="833"/>
    </location>
</feature>
<feature type="sequence conflict" description="In Ref. 3; BAC98105." evidence="7" ref="3">
    <original>S</original>
    <variation>P</variation>
    <location>
        <position position="61"/>
    </location>
</feature>
<feature type="sequence conflict" description="In Ref. 3; BAC98105." evidence="7" ref="3">
    <original>E</original>
    <variation>D</variation>
    <location>
        <position position="94"/>
    </location>
</feature>
<feature type="sequence conflict" description="In Ref. 1; BAE42850." evidence="7" ref="1">
    <original>H</original>
    <variation>Y</variation>
    <location>
        <position position="108"/>
    </location>
</feature>
<feature type="sequence conflict" description="In Ref. 3; BAC98105." evidence="7" ref="3">
    <original>T</original>
    <variation>A</variation>
    <location>
        <position position="129"/>
    </location>
</feature>
<feature type="sequence conflict" description="In Ref. 3; BAC98105." evidence="7" ref="3">
    <original>S</original>
    <variation>P</variation>
    <location>
        <position position="181"/>
    </location>
</feature>
<feature type="sequence conflict" description="In Ref. 3; BAC98105." evidence="7" ref="3">
    <original>I</original>
    <variation>M</variation>
    <location>
        <position position="212"/>
    </location>
</feature>
<feature type="sequence conflict" description="In Ref. 1; BAE42850 and 3; BAC98105." evidence="7" ref="1 3">
    <original>A</original>
    <variation>N</variation>
    <location>
        <position position="307"/>
    </location>
</feature>
<feature type="sequence conflict" description="In Ref. 3; BAC98105." evidence="7" ref="3">
    <original>V</original>
    <variation>I</variation>
    <location>
        <position position="353"/>
    </location>
</feature>
<feature type="sequence conflict" description="In Ref. 3; BAC98105." evidence="7" ref="3">
    <original>N</original>
    <variation>S</variation>
    <location>
        <position position="382"/>
    </location>
</feature>
<feature type="sequence conflict" description="In Ref. 3; BAC98105." evidence="7" ref="3">
    <original>N</original>
    <variation>K</variation>
    <location>
        <position position="424"/>
    </location>
</feature>
<feature type="sequence conflict" description="In Ref. 3; BAC98105." evidence="7" ref="3">
    <original>M</original>
    <variation>V</variation>
    <location>
        <position position="433"/>
    </location>
</feature>
<feature type="sequence conflict" description="In Ref. 3; BAC98105." evidence="7" ref="3">
    <original>F</original>
    <variation>L</variation>
    <location>
        <position position="449"/>
    </location>
</feature>
<feature type="sequence conflict" description="In Ref. 3; BAC98105." evidence="7" ref="3">
    <original>S</original>
    <variation>G</variation>
    <location>
        <position position="460"/>
    </location>
</feature>
<feature type="sequence conflict" description="In Ref. 1; BAE42850." evidence="7" ref="1">
    <original>H</original>
    <variation>Q</variation>
    <location>
        <position position="479"/>
    </location>
</feature>
<feature type="modified residue" description="Phosphoserine" evidence="8">
    <location sequence="Q3UHI0-2">
        <position position="843"/>
    </location>
</feature>
<reference key="1">
    <citation type="journal article" date="2005" name="Science">
        <title>The transcriptional landscape of the mammalian genome.</title>
        <authorList>
            <person name="Carninci P."/>
            <person name="Kasukawa T."/>
            <person name="Katayama S."/>
            <person name="Gough J."/>
            <person name="Frith M.C."/>
            <person name="Maeda N."/>
            <person name="Oyama R."/>
            <person name="Ravasi T."/>
            <person name="Lenhard B."/>
            <person name="Wells C."/>
            <person name="Kodzius R."/>
            <person name="Shimokawa K."/>
            <person name="Bajic V.B."/>
            <person name="Brenner S.E."/>
            <person name="Batalov S."/>
            <person name="Forrest A.R."/>
            <person name="Zavolan M."/>
            <person name="Davis M.J."/>
            <person name="Wilming L.G."/>
            <person name="Aidinis V."/>
            <person name="Allen J.E."/>
            <person name="Ambesi-Impiombato A."/>
            <person name="Apweiler R."/>
            <person name="Aturaliya R.N."/>
            <person name="Bailey T.L."/>
            <person name="Bansal M."/>
            <person name="Baxter L."/>
            <person name="Beisel K.W."/>
            <person name="Bersano T."/>
            <person name="Bono H."/>
            <person name="Chalk A.M."/>
            <person name="Chiu K.P."/>
            <person name="Choudhary V."/>
            <person name="Christoffels A."/>
            <person name="Clutterbuck D.R."/>
            <person name="Crowe M.L."/>
            <person name="Dalla E."/>
            <person name="Dalrymple B.P."/>
            <person name="de Bono B."/>
            <person name="Della Gatta G."/>
            <person name="di Bernardo D."/>
            <person name="Down T."/>
            <person name="Engstrom P."/>
            <person name="Fagiolini M."/>
            <person name="Faulkner G."/>
            <person name="Fletcher C.F."/>
            <person name="Fukushima T."/>
            <person name="Furuno M."/>
            <person name="Futaki S."/>
            <person name="Gariboldi M."/>
            <person name="Georgii-Hemming P."/>
            <person name="Gingeras T.R."/>
            <person name="Gojobori T."/>
            <person name="Green R.E."/>
            <person name="Gustincich S."/>
            <person name="Harbers M."/>
            <person name="Hayashi Y."/>
            <person name="Hensch T.K."/>
            <person name="Hirokawa N."/>
            <person name="Hill D."/>
            <person name="Huminiecki L."/>
            <person name="Iacono M."/>
            <person name="Ikeo K."/>
            <person name="Iwama A."/>
            <person name="Ishikawa T."/>
            <person name="Jakt M."/>
            <person name="Kanapin A."/>
            <person name="Katoh M."/>
            <person name="Kawasawa Y."/>
            <person name="Kelso J."/>
            <person name="Kitamura H."/>
            <person name="Kitano H."/>
            <person name="Kollias G."/>
            <person name="Krishnan S.P."/>
            <person name="Kruger A."/>
            <person name="Kummerfeld S.K."/>
            <person name="Kurochkin I.V."/>
            <person name="Lareau L.F."/>
            <person name="Lazarevic D."/>
            <person name="Lipovich L."/>
            <person name="Liu J."/>
            <person name="Liuni S."/>
            <person name="McWilliam S."/>
            <person name="Madan Babu M."/>
            <person name="Madera M."/>
            <person name="Marchionni L."/>
            <person name="Matsuda H."/>
            <person name="Matsuzawa S."/>
            <person name="Miki H."/>
            <person name="Mignone F."/>
            <person name="Miyake S."/>
            <person name="Morris K."/>
            <person name="Mottagui-Tabar S."/>
            <person name="Mulder N."/>
            <person name="Nakano N."/>
            <person name="Nakauchi H."/>
            <person name="Ng P."/>
            <person name="Nilsson R."/>
            <person name="Nishiguchi S."/>
            <person name="Nishikawa S."/>
            <person name="Nori F."/>
            <person name="Ohara O."/>
            <person name="Okazaki Y."/>
            <person name="Orlando V."/>
            <person name="Pang K.C."/>
            <person name="Pavan W.J."/>
            <person name="Pavesi G."/>
            <person name="Pesole G."/>
            <person name="Petrovsky N."/>
            <person name="Piazza S."/>
            <person name="Reed J."/>
            <person name="Reid J.F."/>
            <person name="Ring B.Z."/>
            <person name="Ringwald M."/>
            <person name="Rost B."/>
            <person name="Ruan Y."/>
            <person name="Salzberg S.L."/>
            <person name="Sandelin A."/>
            <person name="Schneider C."/>
            <person name="Schoenbach C."/>
            <person name="Sekiguchi K."/>
            <person name="Semple C.A."/>
            <person name="Seno S."/>
            <person name="Sessa L."/>
            <person name="Sheng Y."/>
            <person name="Shibata Y."/>
            <person name="Shimada H."/>
            <person name="Shimada K."/>
            <person name="Silva D."/>
            <person name="Sinclair B."/>
            <person name="Sperling S."/>
            <person name="Stupka E."/>
            <person name="Sugiura K."/>
            <person name="Sultana R."/>
            <person name="Takenaka Y."/>
            <person name="Taki K."/>
            <person name="Tammoja K."/>
            <person name="Tan S.L."/>
            <person name="Tang S."/>
            <person name="Taylor M.S."/>
            <person name="Tegner J."/>
            <person name="Teichmann S.A."/>
            <person name="Ueda H.R."/>
            <person name="van Nimwegen E."/>
            <person name="Verardo R."/>
            <person name="Wei C.L."/>
            <person name="Yagi K."/>
            <person name="Yamanishi H."/>
            <person name="Zabarovsky E."/>
            <person name="Zhu S."/>
            <person name="Zimmer A."/>
            <person name="Hide W."/>
            <person name="Bult C."/>
            <person name="Grimmond S.M."/>
            <person name="Teasdale R.D."/>
            <person name="Liu E.T."/>
            <person name="Brusic V."/>
            <person name="Quackenbush J."/>
            <person name="Wahlestedt C."/>
            <person name="Mattick J.S."/>
            <person name="Hume D.A."/>
            <person name="Kai C."/>
            <person name="Sasaki D."/>
            <person name="Tomaru Y."/>
            <person name="Fukuda S."/>
            <person name="Kanamori-Katayama M."/>
            <person name="Suzuki M."/>
            <person name="Aoki J."/>
            <person name="Arakawa T."/>
            <person name="Iida J."/>
            <person name="Imamura K."/>
            <person name="Itoh M."/>
            <person name="Kato T."/>
            <person name="Kawaji H."/>
            <person name="Kawagashira N."/>
            <person name="Kawashima T."/>
            <person name="Kojima M."/>
            <person name="Kondo S."/>
            <person name="Konno H."/>
            <person name="Nakano K."/>
            <person name="Ninomiya N."/>
            <person name="Nishio T."/>
            <person name="Okada M."/>
            <person name="Plessy C."/>
            <person name="Shibata K."/>
            <person name="Shiraki T."/>
            <person name="Suzuki S."/>
            <person name="Tagami M."/>
            <person name="Waki K."/>
            <person name="Watahiki A."/>
            <person name="Okamura-Oho Y."/>
            <person name="Suzuki H."/>
            <person name="Kawai J."/>
            <person name="Hayashizaki Y."/>
        </authorList>
    </citation>
    <scope>NUCLEOTIDE SEQUENCE [LARGE SCALE MRNA] (ISOFORM 1)</scope>
    <scope>NUCLEOTIDE SEQUENCE [LARGE SCALE MRNA] OF 538-833 (ISOFORM 2)</scope>
    <source>
        <strain>C57BL/6J</strain>
        <strain>NOD</strain>
        <tissue>Spleen</tissue>
        <tissue>Testis</tissue>
    </source>
</reference>
<reference key="2">
    <citation type="journal article" date="2004" name="Genome Res.">
        <title>The status, quality, and expansion of the NIH full-length cDNA project: the Mammalian Gene Collection (MGC).</title>
        <authorList>
            <consortium name="The MGC Project Team"/>
        </authorList>
    </citation>
    <scope>NUCLEOTIDE SEQUENCE [LARGE SCALE MRNA] (ISOFORM 1)</scope>
    <scope>NUCLEOTIDE SEQUENCE [LARGE SCALE MRNA] OF 454-833 (ISOFORM 2)</scope>
    <source>
        <strain>C57BL/6J</strain>
        <tissue>Brain</tissue>
        <tissue>Testis</tissue>
    </source>
</reference>
<reference key="3">
    <citation type="journal article" date="2003" name="DNA Res.">
        <title>Prediction of the coding sequences of mouse homologues of KIAA gene: III. The complete nucleotide sequences of 500 mouse KIAA-homologous cDNAs identified by screening of terminal sequences of cDNA clones randomly sampled from size-fractionated libraries.</title>
        <authorList>
            <person name="Okazaki N."/>
            <person name="Kikuno R."/>
            <person name="Ohara R."/>
            <person name="Inamoto S."/>
            <person name="Koseki H."/>
            <person name="Hiraoka S."/>
            <person name="Saga Y."/>
            <person name="Nagase T."/>
            <person name="Ohara O."/>
            <person name="Koga H."/>
        </authorList>
    </citation>
    <scope>NUCLEOTIDE SEQUENCE [LARGE SCALE MRNA] OF 57-728 (ISOFORMS 1/2)</scope>
    <source>
        <tissue>Embryonic tail</tissue>
    </source>
</reference>
<reference key="4">
    <citation type="journal article" date="2007" name="Proc. Natl. Acad. Sci. U.S.A.">
        <title>Large-scale phosphorylation analysis of mouse liver.</title>
        <authorList>
            <person name="Villen J."/>
            <person name="Beausoleil S.A."/>
            <person name="Gerber S.A."/>
            <person name="Gygi S.P."/>
        </authorList>
    </citation>
    <scope>IDENTIFICATION BY MASS SPECTROMETRY [LARGE SCALE ANALYSIS]</scope>
    <source>
        <tissue>Liver</tissue>
    </source>
</reference>
<reference key="5">
    <citation type="journal article" date="2010" name="Cell">
        <title>A tissue-specific atlas of mouse protein phosphorylation and expression.</title>
        <authorList>
            <person name="Huttlin E.L."/>
            <person name="Jedrychowski M.P."/>
            <person name="Elias J.E."/>
            <person name="Goswami T."/>
            <person name="Rad R."/>
            <person name="Beausoleil S.A."/>
            <person name="Villen J."/>
            <person name="Haas W."/>
            <person name="Sowa M.E."/>
            <person name="Gygi S.P."/>
        </authorList>
    </citation>
    <scope>PHOSPHORYLATION [LARGE SCALE ANALYSIS] AT SER-451</scope>
    <scope>PHOSPHORYLATION [LARGE SCALE ANALYSIS] AT SER-843 (ISOFORM 2)</scope>
    <scope>IDENTIFICATION BY MASS SPECTROMETRY [LARGE SCALE ANALYSIS]</scope>
    <source>
        <tissue>Brain</tissue>
        <tissue>Brown adipose tissue</tissue>
        <tissue>Kidney</tissue>
        <tissue>Liver</tissue>
        <tissue>Testis</tissue>
    </source>
</reference>
<reference key="6">
    <citation type="journal article" date="2012" name="FEBS Lett.">
        <title>The murine Gcap14 gene encodes a novel microtubule binding and bundling protein.</title>
        <authorList>
            <person name="Hosono H."/>
            <person name="Yamaguchi N."/>
            <person name="Oshima K."/>
            <person name="Matsuda T."/>
            <person name="Nadano D."/>
        </authorList>
    </citation>
    <scope>FUNCTION</scope>
    <scope>SUBCELLULAR LOCATION</scope>
    <scope>TISSUE SPECIFICITY</scope>
</reference>
<accession>Q3UHI0</accession>
<accession>B2RT11</accession>
<accession>Q2NKY3</accession>
<accession>Q3TA20</accession>
<accession>Q6ZPX3</accession>
<accession>Q9DAD5</accession>
<keyword id="KW-0025">Alternative splicing</keyword>
<keyword id="KW-0175">Coiled coil</keyword>
<keyword id="KW-0963">Cytoplasm</keyword>
<keyword id="KW-0206">Cytoskeleton</keyword>
<keyword id="KW-0597">Phosphoprotein</keyword>
<keyword id="KW-1185">Reference proteome</keyword>
<organism>
    <name type="scientific">Mus musculus</name>
    <name type="common">Mouse</name>
    <dbReference type="NCBI Taxonomy" id="10090"/>
    <lineage>
        <taxon>Eukaryota</taxon>
        <taxon>Metazoa</taxon>
        <taxon>Chordata</taxon>
        <taxon>Craniata</taxon>
        <taxon>Vertebrata</taxon>
        <taxon>Euteleostomi</taxon>
        <taxon>Mammalia</taxon>
        <taxon>Eutheria</taxon>
        <taxon>Euarchontoglires</taxon>
        <taxon>Glires</taxon>
        <taxon>Rodentia</taxon>
        <taxon>Myomorpha</taxon>
        <taxon>Muroidea</taxon>
        <taxon>Muridae</taxon>
        <taxon>Murinae</taxon>
        <taxon>Mus</taxon>
        <taxon>Mus</taxon>
    </lineage>
</organism>
<dbReference type="EMBL" id="AK005931">
    <property type="protein sequence ID" value="BAB24323.1"/>
    <property type="status" value="ALT_INIT"/>
    <property type="molecule type" value="mRNA"/>
</dbReference>
<dbReference type="EMBL" id="AK147383">
    <property type="protein sequence ID" value="BAE27877.1"/>
    <property type="molecule type" value="mRNA"/>
</dbReference>
<dbReference type="EMBL" id="AK172153">
    <property type="protein sequence ID" value="BAE42850.1"/>
    <property type="molecule type" value="mRNA"/>
</dbReference>
<dbReference type="EMBL" id="BC111465">
    <property type="protein sequence ID" value="AAI11466.1"/>
    <property type="molecule type" value="mRNA"/>
</dbReference>
<dbReference type="EMBL" id="BC139090">
    <property type="protein sequence ID" value="AAI39091.1"/>
    <property type="molecule type" value="mRNA"/>
</dbReference>
<dbReference type="EMBL" id="AK129295">
    <property type="protein sequence ID" value="BAC98105.1"/>
    <property type="molecule type" value="mRNA"/>
</dbReference>
<dbReference type="CCDS" id="CCDS26948.1">
    <molecule id="Q3UHI0-1"/>
</dbReference>
<dbReference type="CCDS" id="CCDS84113.1">
    <molecule id="Q3UHI0-2"/>
</dbReference>
<dbReference type="RefSeq" id="NP_001334431.1">
    <molecule id="Q3UHI0-2"/>
    <property type="nucleotide sequence ID" value="NM_001347502.1"/>
</dbReference>
<dbReference type="RefSeq" id="NP_001334432.1">
    <property type="nucleotide sequence ID" value="NM_001347503.1"/>
</dbReference>
<dbReference type="RefSeq" id="NP_081321.1">
    <molecule id="Q3UHI0-1"/>
    <property type="nucleotide sequence ID" value="NM_027045.1"/>
</dbReference>
<dbReference type="RefSeq" id="NP_082683.2">
    <property type="nucleotide sequence ID" value="NM_028407.3"/>
</dbReference>
<dbReference type="RefSeq" id="XP_030103908.1">
    <molecule id="Q3UHI0-2"/>
    <property type="nucleotide sequence ID" value="XM_030248048.2"/>
</dbReference>
<dbReference type="SMR" id="Q3UHI0"/>
<dbReference type="BioGRID" id="215684">
    <property type="interactions" value="9"/>
</dbReference>
<dbReference type="FunCoup" id="Q3UHI0">
    <property type="interactions" value="574"/>
</dbReference>
<dbReference type="IntAct" id="Q3UHI0">
    <property type="interactions" value="9"/>
</dbReference>
<dbReference type="STRING" id="10090.ENSMUSP00000068550"/>
<dbReference type="iPTMnet" id="Q3UHI0"/>
<dbReference type="PhosphoSitePlus" id="Q3UHI0"/>
<dbReference type="jPOST" id="Q3UHI0"/>
<dbReference type="PaxDb" id="10090-ENSMUSP00000087478"/>
<dbReference type="ProteomicsDB" id="279956">
    <molecule id="Q3UHI0-1"/>
</dbReference>
<dbReference type="ProteomicsDB" id="279957">
    <molecule id="Q3UHI0-2"/>
</dbReference>
<dbReference type="Antibodypedia" id="48922">
    <property type="antibodies" value="30 antibodies from 9 providers"/>
</dbReference>
<dbReference type="DNASU" id="72972"/>
<dbReference type="Ensembl" id="ENSMUST00000067700.13">
    <molecule id="Q3UHI0-2"/>
    <property type="protein sequence ID" value="ENSMUSP00000068550.7"/>
    <property type="gene ID" value="ENSMUSG00000058690.15"/>
</dbReference>
<dbReference type="Ensembl" id="ENSMUST00000090024.11">
    <molecule id="Q3UHI0-1"/>
    <property type="protein sequence ID" value="ENSMUSP00000087478.4"/>
    <property type="gene ID" value="ENSMUSG00000058690.15"/>
</dbReference>
<dbReference type="GeneID" id="72972"/>
<dbReference type="KEGG" id="mmu:72972"/>
<dbReference type="UCSC" id="uc007tbn.1">
    <molecule id="Q3UHI0-2"/>
    <property type="organism name" value="mouse"/>
</dbReference>
<dbReference type="UCSC" id="uc007tbo.1">
    <molecule id="Q3UHI0-1"/>
    <property type="organism name" value="mouse"/>
</dbReference>
<dbReference type="AGR" id="MGI:101859"/>
<dbReference type="CTD" id="54462"/>
<dbReference type="MGI" id="MGI:101859">
    <property type="gene designation" value="Ccser2"/>
</dbReference>
<dbReference type="VEuPathDB" id="HostDB:ENSMUSG00000058690"/>
<dbReference type="eggNOG" id="ENOG502QV4S">
    <property type="taxonomic scope" value="Eukaryota"/>
</dbReference>
<dbReference type="GeneTree" id="ENSGT00940000153912"/>
<dbReference type="HOGENOM" id="CLU_010809_0_0_1"/>
<dbReference type="InParanoid" id="Q3UHI0"/>
<dbReference type="OMA" id="NECTKHT"/>
<dbReference type="PhylomeDB" id="Q3UHI0"/>
<dbReference type="TreeFam" id="TF331021"/>
<dbReference type="BioGRID-ORCS" id="72972">
    <property type="hits" value="3 hits in 74 CRISPR screens"/>
</dbReference>
<dbReference type="ChiTaRS" id="Ccser2">
    <property type="organism name" value="mouse"/>
</dbReference>
<dbReference type="PRO" id="PR:Q3UHI0"/>
<dbReference type="Proteomes" id="UP000000589">
    <property type="component" value="Chromosome 14"/>
</dbReference>
<dbReference type="RNAct" id="Q3UHI0">
    <property type="molecule type" value="protein"/>
</dbReference>
<dbReference type="Bgee" id="ENSMUSG00000058690">
    <property type="expression patterns" value="Expressed in rostral migratory stream and 249 other cell types or tissues"/>
</dbReference>
<dbReference type="ExpressionAtlas" id="Q3UHI0">
    <property type="expression patterns" value="baseline and differential"/>
</dbReference>
<dbReference type="GO" id="GO:0005737">
    <property type="term" value="C:cytoplasm"/>
    <property type="evidence" value="ECO:0007669"/>
    <property type="project" value="UniProtKB-KW"/>
</dbReference>
<dbReference type="GO" id="GO:0015630">
    <property type="term" value="C:microtubule cytoskeleton"/>
    <property type="evidence" value="ECO:0000314"/>
    <property type="project" value="MGI"/>
</dbReference>
<dbReference type="GO" id="GO:0008017">
    <property type="term" value="F:microtubule binding"/>
    <property type="evidence" value="ECO:0000314"/>
    <property type="project" value="MGI"/>
</dbReference>
<dbReference type="GO" id="GO:0001578">
    <property type="term" value="P:microtubule bundle formation"/>
    <property type="evidence" value="ECO:0000314"/>
    <property type="project" value="MGI"/>
</dbReference>
<dbReference type="InterPro" id="IPR029627">
    <property type="entry name" value="CCSER"/>
</dbReference>
<dbReference type="PANTHER" id="PTHR22461:SF2">
    <property type="entry name" value="SERINE-RICH COILED-COIL DOMAIN-CONTAINING PROTEIN 2"/>
    <property type="match status" value="1"/>
</dbReference>
<dbReference type="PANTHER" id="PTHR22461">
    <property type="entry name" value="SERINE-RICH COILED-COIL DOMAIN-CONTAINING PROTEIN 2-RELATED"/>
    <property type="match status" value="1"/>
</dbReference>
<gene>
    <name type="primary">Ccser2</name>
    <name type="synonym">Fam190b</name>
    <name type="synonym">Gcap14</name>
    <name type="synonym">Kiaa1128</name>
</gene>
<comment type="function">
    <text evidence="4">Microtubule-binding protein which might play a role in microtubule bundling.</text>
</comment>
<comment type="subcellular location">
    <subcellularLocation>
        <location evidence="4">Cytoplasm</location>
        <location evidence="4">Cytoskeleton</location>
    </subcellularLocation>
    <text evidence="4">Associates with microtubules in interphase. Has diffuse expression throughout the cell during mitosis.</text>
</comment>
<comment type="alternative products">
    <event type="alternative splicing"/>
    <isoform>
        <id>Q3UHI0-1</id>
        <name>1</name>
        <sequence type="displayed"/>
    </isoform>
    <isoform>
        <id>Q3UHI0-2</id>
        <name>2</name>
        <sequence type="described" ref="VSP_029183"/>
    </isoform>
</comment>
<comment type="tissue specificity">
    <text evidence="4">Expressed in brain (at protein level).</text>
</comment>
<comment type="similarity">
    <text evidence="7">Belongs to the CCSER family.</text>
</comment>
<comment type="sequence caution" evidence="7">
    <conflict type="erroneous initiation">
        <sequence resource="EMBL-CDS" id="BAB24323"/>
    </conflict>
    <text>Truncated N-terminus.</text>
</comment>
<proteinExistence type="evidence at protein level"/>
<protein>
    <recommendedName>
        <fullName>Serine-rich coiled-coil domain-containing protein 2</fullName>
    </recommendedName>
    <alternativeName>
        <fullName>Coiled-coil serine-rich protein 2</fullName>
    </alternativeName>
    <alternativeName>
        <fullName>Granule cell antiserum positive protein 14</fullName>
    </alternativeName>
    <alternativeName>
        <fullName>Protein GCAP14</fullName>
    </alternativeName>
</protein>
<name>CCSE2_MOUSE</name>
<evidence type="ECO:0000250" key="1">
    <source>
        <dbReference type="UniProtKB" id="Q9H7U1"/>
    </source>
</evidence>
<evidence type="ECO:0000255" key="2"/>
<evidence type="ECO:0000256" key="3">
    <source>
        <dbReference type="SAM" id="MobiDB-lite"/>
    </source>
</evidence>
<evidence type="ECO:0000269" key="4">
    <source>
    </source>
</evidence>
<evidence type="ECO:0000303" key="5">
    <source>
    </source>
</evidence>
<evidence type="ECO:0000303" key="6">
    <source>
    </source>
</evidence>
<evidence type="ECO:0000305" key="7"/>
<evidence type="ECO:0007744" key="8">
    <source>
    </source>
</evidence>